<keyword id="KW-1185">Reference proteome</keyword>
<gene>
    <name type="ordered locus">At1g33020</name>
    <name type="ORF">F9L11.17</name>
</gene>
<sequence>MNRAENLDSIPTDLILEIFSRMSTKSIGRCRCVSKLWKSMLGHPYFTELFLTRSSDHPRLLFGVKRERQWLFFSSPQPQDLYEKSSLVDFHMNFSDFHMNFSGDIRRNECTYVSGFIYFPRKRIKNYLCDFRVICNPITGQYAILQLITFHEKRSFLGFDPIDKQFKVLRMKYNDRGIVVHHILTLEPGKMRWRKIRCPLAHEPFWEEICANGVLYYLAEPTDGGSYVICCFDVRSEKFKFIDAKCFGDFSIQLINYKGKLGGISWKYDTVDGKRTVELYMWVLEDVEKQKWSKYVYPLPGNSYHYSVAGVTAKGDIVFVKTYTSKPFYVFYVNPEKKTFQRVEIHGNHEVFDTNNLVYAFVDHVEDLQFDVMKKTYAAKPISPPKQKPKPPSTETSSREDHQGWISISSRKYHQVRTIAHRQQGRRKFESINKFNALYLDDGDEDTVAHQQRDHHTFKSISKFKAQRLLDDDEFTGVKTSKCDTSHLQNRVTAVHELHIWSITVGKVSLASQVSIKPEADTDAILDKVIEYIKRHHVTIQVEKEQNP</sequence>
<organism>
    <name type="scientific">Arabidopsis thaliana</name>
    <name type="common">Mouse-ear cress</name>
    <dbReference type="NCBI Taxonomy" id="3702"/>
    <lineage>
        <taxon>Eukaryota</taxon>
        <taxon>Viridiplantae</taxon>
        <taxon>Streptophyta</taxon>
        <taxon>Embryophyta</taxon>
        <taxon>Tracheophyta</taxon>
        <taxon>Spermatophyta</taxon>
        <taxon>Magnoliopsida</taxon>
        <taxon>eudicotyledons</taxon>
        <taxon>Gunneridae</taxon>
        <taxon>Pentapetalae</taxon>
        <taxon>rosids</taxon>
        <taxon>malvids</taxon>
        <taxon>Brassicales</taxon>
        <taxon>Brassicaceae</taxon>
        <taxon>Camelineae</taxon>
        <taxon>Arabidopsis</taxon>
    </lineage>
</organism>
<comment type="sequence caution" evidence="3">
    <conflict type="erroneous gene model prediction">
        <sequence resource="EMBL-CDS" id="AAF31290"/>
    </conflict>
</comment>
<reference key="1">
    <citation type="journal article" date="2000" name="Nature">
        <title>Sequence and analysis of chromosome 1 of the plant Arabidopsis thaliana.</title>
        <authorList>
            <person name="Theologis A."/>
            <person name="Ecker J.R."/>
            <person name="Palm C.J."/>
            <person name="Federspiel N.A."/>
            <person name="Kaul S."/>
            <person name="White O."/>
            <person name="Alonso J."/>
            <person name="Altafi H."/>
            <person name="Araujo R."/>
            <person name="Bowman C.L."/>
            <person name="Brooks S.Y."/>
            <person name="Buehler E."/>
            <person name="Chan A."/>
            <person name="Chao Q."/>
            <person name="Chen H."/>
            <person name="Cheuk R.F."/>
            <person name="Chin C.W."/>
            <person name="Chung M.K."/>
            <person name="Conn L."/>
            <person name="Conway A.B."/>
            <person name="Conway A.R."/>
            <person name="Creasy T.H."/>
            <person name="Dewar K."/>
            <person name="Dunn P."/>
            <person name="Etgu P."/>
            <person name="Feldblyum T.V."/>
            <person name="Feng J.-D."/>
            <person name="Fong B."/>
            <person name="Fujii C.Y."/>
            <person name="Gill J.E."/>
            <person name="Goldsmith A.D."/>
            <person name="Haas B."/>
            <person name="Hansen N.F."/>
            <person name="Hughes B."/>
            <person name="Huizar L."/>
            <person name="Hunter J.L."/>
            <person name="Jenkins J."/>
            <person name="Johnson-Hopson C."/>
            <person name="Khan S."/>
            <person name="Khaykin E."/>
            <person name="Kim C.J."/>
            <person name="Koo H.L."/>
            <person name="Kremenetskaia I."/>
            <person name="Kurtz D.B."/>
            <person name="Kwan A."/>
            <person name="Lam B."/>
            <person name="Langin-Hooper S."/>
            <person name="Lee A."/>
            <person name="Lee J.M."/>
            <person name="Lenz C.A."/>
            <person name="Li J.H."/>
            <person name="Li Y.-P."/>
            <person name="Lin X."/>
            <person name="Liu S.X."/>
            <person name="Liu Z.A."/>
            <person name="Luros J.S."/>
            <person name="Maiti R."/>
            <person name="Marziali A."/>
            <person name="Militscher J."/>
            <person name="Miranda M."/>
            <person name="Nguyen M."/>
            <person name="Nierman W.C."/>
            <person name="Osborne B.I."/>
            <person name="Pai G."/>
            <person name="Peterson J."/>
            <person name="Pham P.K."/>
            <person name="Rizzo M."/>
            <person name="Rooney T."/>
            <person name="Rowley D."/>
            <person name="Sakano H."/>
            <person name="Salzberg S.L."/>
            <person name="Schwartz J.R."/>
            <person name="Shinn P."/>
            <person name="Southwick A.M."/>
            <person name="Sun H."/>
            <person name="Tallon L.J."/>
            <person name="Tambunga G."/>
            <person name="Toriumi M.J."/>
            <person name="Town C.D."/>
            <person name="Utterback T."/>
            <person name="Van Aken S."/>
            <person name="Vaysberg M."/>
            <person name="Vysotskaia V.S."/>
            <person name="Walker M."/>
            <person name="Wu D."/>
            <person name="Yu G."/>
            <person name="Fraser C.M."/>
            <person name="Venter J.C."/>
            <person name="Davis R.W."/>
        </authorList>
    </citation>
    <scope>NUCLEOTIDE SEQUENCE [LARGE SCALE GENOMIC DNA]</scope>
    <source>
        <strain>cv. Columbia</strain>
    </source>
</reference>
<reference key="2">
    <citation type="journal article" date="2017" name="Plant J.">
        <title>Araport11: a complete reannotation of the Arabidopsis thaliana reference genome.</title>
        <authorList>
            <person name="Cheng C.Y."/>
            <person name="Krishnakumar V."/>
            <person name="Chan A.P."/>
            <person name="Thibaud-Nissen F."/>
            <person name="Schobel S."/>
            <person name="Town C.D."/>
        </authorList>
    </citation>
    <scope>GENOME REANNOTATION</scope>
    <source>
        <strain>cv. Columbia</strain>
    </source>
</reference>
<evidence type="ECO:0000255" key="1">
    <source>
        <dbReference type="PROSITE-ProRule" id="PRU00080"/>
    </source>
</evidence>
<evidence type="ECO:0000256" key="2">
    <source>
        <dbReference type="SAM" id="MobiDB-lite"/>
    </source>
</evidence>
<evidence type="ECO:0000305" key="3"/>
<accession>Q9MAP1</accession>
<accession>F4HPF8</accession>
<dbReference type="EMBL" id="AC006424">
    <property type="protein sequence ID" value="AAF31290.1"/>
    <property type="status" value="ALT_SEQ"/>
    <property type="molecule type" value="Genomic_DNA"/>
</dbReference>
<dbReference type="EMBL" id="CP002684">
    <property type="protein sequence ID" value="AEE31550.1"/>
    <property type="molecule type" value="Genomic_DNA"/>
</dbReference>
<dbReference type="PIR" id="G86454">
    <property type="entry name" value="G86454"/>
</dbReference>
<dbReference type="RefSeq" id="NP_174578.1">
    <property type="nucleotide sequence ID" value="NM_103035.1"/>
</dbReference>
<dbReference type="SMR" id="Q9MAP1"/>
<dbReference type="FunCoup" id="Q9MAP1">
    <property type="interactions" value="24"/>
</dbReference>
<dbReference type="PaxDb" id="3702-AT1G33020.1"/>
<dbReference type="ProteomicsDB" id="230643"/>
<dbReference type="EnsemblPlants" id="AT1G33020.1">
    <property type="protein sequence ID" value="AT1G33020.1"/>
    <property type="gene ID" value="AT1G33020"/>
</dbReference>
<dbReference type="GeneID" id="840197"/>
<dbReference type="Gramene" id="AT1G33020.1">
    <property type="protein sequence ID" value="AT1G33020.1"/>
    <property type="gene ID" value="AT1G33020"/>
</dbReference>
<dbReference type="KEGG" id="ath:AT1G33020"/>
<dbReference type="Araport" id="AT1G33020"/>
<dbReference type="TAIR" id="AT1G33020"/>
<dbReference type="eggNOG" id="KOG1482">
    <property type="taxonomic scope" value="Eukaryota"/>
</dbReference>
<dbReference type="HOGENOM" id="CLU_027176_8_1_1"/>
<dbReference type="InParanoid" id="Q9MAP1"/>
<dbReference type="OMA" id="FRVICNP"/>
<dbReference type="PRO" id="PR:Q9MAP1"/>
<dbReference type="Proteomes" id="UP000006548">
    <property type="component" value="Chromosome 1"/>
</dbReference>
<dbReference type="ExpressionAtlas" id="Q9MAP1">
    <property type="expression patterns" value="baseline"/>
</dbReference>
<dbReference type="Gene3D" id="1.20.1280.50">
    <property type="match status" value="1"/>
</dbReference>
<dbReference type="InterPro" id="IPR013187">
    <property type="entry name" value="F-box-assoc_dom_typ3"/>
</dbReference>
<dbReference type="InterPro" id="IPR017451">
    <property type="entry name" value="F-box-assoc_interact_dom"/>
</dbReference>
<dbReference type="InterPro" id="IPR036047">
    <property type="entry name" value="F-box-like_dom_sf"/>
</dbReference>
<dbReference type="InterPro" id="IPR001810">
    <property type="entry name" value="F-box_dom"/>
</dbReference>
<dbReference type="NCBIfam" id="TIGR01640">
    <property type="entry name" value="F_box_assoc_1"/>
    <property type="match status" value="1"/>
</dbReference>
<dbReference type="PANTHER" id="PTHR31111">
    <property type="entry name" value="BNAA05G37150D PROTEIN-RELATED"/>
    <property type="match status" value="1"/>
</dbReference>
<dbReference type="PANTHER" id="PTHR31111:SF130">
    <property type="entry name" value="F-BOX ASSOCIATED UBIQUITINATION EFFECTOR FAMILY PROTEIN"/>
    <property type="match status" value="1"/>
</dbReference>
<dbReference type="Pfam" id="PF00646">
    <property type="entry name" value="F-box"/>
    <property type="match status" value="1"/>
</dbReference>
<dbReference type="Pfam" id="PF08268">
    <property type="entry name" value="FBA_3"/>
    <property type="match status" value="1"/>
</dbReference>
<dbReference type="SMART" id="SM00256">
    <property type="entry name" value="FBOX"/>
    <property type="match status" value="1"/>
</dbReference>
<dbReference type="SUPFAM" id="SSF81383">
    <property type="entry name" value="F-box domain"/>
    <property type="match status" value="1"/>
</dbReference>
<dbReference type="PROSITE" id="PS50181">
    <property type="entry name" value="FBOX"/>
    <property type="match status" value="1"/>
</dbReference>
<proteinExistence type="predicted"/>
<feature type="chain" id="PRO_0000283309" description="Putative F-box protein At1g33020">
    <location>
        <begin position="1"/>
        <end position="548"/>
    </location>
</feature>
<feature type="domain" description="F-box" evidence="1">
    <location>
        <begin position="4"/>
        <end position="53"/>
    </location>
</feature>
<feature type="region of interest" description="Disordered" evidence="2">
    <location>
        <begin position="380"/>
        <end position="404"/>
    </location>
</feature>
<feature type="compositionally biased region" description="Pro residues" evidence="2">
    <location>
        <begin position="382"/>
        <end position="392"/>
    </location>
</feature>
<protein>
    <recommendedName>
        <fullName>Putative F-box protein At1g33020</fullName>
    </recommendedName>
</protein>
<name>FB33_ARATH</name>